<name>RNPA_STRP4</name>
<comment type="function">
    <text evidence="1">RNaseP catalyzes the removal of the 5'-leader sequence from pre-tRNA to produce the mature 5'-terminus. It can also cleave other RNA substrates such as 4.5S RNA. The protein component plays an auxiliary but essential role in vivo by binding to the 5'-leader sequence and broadening the substrate specificity of the ribozyme.</text>
</comment>
<comment type="catalytic activity">
    <reaction evidence="1">
        <text>Endonucleolytic cleavage of RNA, removing 5'-extranucleotides from tRNA precursor.</text>
        <dbReference type="EC" id="3.1.26.5"/>
    </reaction>
</comment>
<comment type="subunit">
    <text evidence="1">Consists of a catalytic RNA component (M1 or rnpB) and a protein subunit.</text>
</comment>
<comment type="similarity">
    <text evidence="1">Belongs to the RnpA family.</text>
</comment>
<proteinExistence type="inferred from homology"/>
<protein>
    <recommendedName>
        <fullName evidence="1">Ribonuclease P protein component</fullName>
        <shortName evidence="1">RNase P protein</shortName>
        <shortName evidence="1">RNaseP protein</shortName>
        <ecNumber evidence="1">3.1.26.5</ecNumber>
    </recommendedName>
    <alternativeName>
        <fullName evidence="1">Protein C5</fullName>
    </alternativeName>
</protein>
<evidence type="ECO:0000255" key="1">
    <source>
        <dbReference type="HAMAP-Rule" id="MF_00227"/>
    </source>
</evidence>
<keyword id="KW-0255">Endonuclease</keyword>
<keyword id="KW-0378">Hydrolase</keyword>
<keyword id="KW-0540">Nuclease</keyword>
<keyword id="KW-0694">RNA-binding</keyword>
<keyword id="KW-0819">tRNA processing</keyword>
<reference key="1">
    <citation type="journal article" date="2001" name="Microb. Drug Resist.">
        <title>Annotated draft genomic sequence from a Streptococcus pneumoniae type 19F clinical isolate.</title>
        <authorList>
            <person name="Dopazo J."/>
            <person name="Mendoza A."/>
            <person name="Herrero J."/>
            <person name="Caldara F."/>
            <person name="Humbert Y."/>
            <person name="Friedli L."/>
            <person name="Guerrier M."/>
            <person name="Grand-Schenk E."/>
            <person name="Gandin C."/>
            <person name="de Francesco M."/>
            <person name="Polissi A."/>
            <person name="Buell G."/>
            <person name="Feger G."/>
            <person name="Garcia E."/>
            <person name="Peitsch M."/>
            <person name="Garcia-Bustos J.F."/>
        </authorList>
    </citation>
    <scope>NUCLEOTIDE SEQUENCE [LARGE SCALE GENOMIC DNA]</scope>
    <source>
        <strain>G54</strain>
    </source>
</reference>
<reference key="2">
    <citation type="submission" date="2008-03" db="EMBL/GenBank/DDBJ databases">
        <title>Pneumococcal beta glucoside metabolism investigated by whole genome comparison.</title>
        <authorList>
            <person name="Mulas L."/>
            <person name="Trappetti C."/>
            <person name="Hakenbeck R."/>
            <person name="Iannelli F."/>
            <person name="Pozzi G."/>
            <person name="Davidsen T.M."/>
            <person name="Tettelin H."/>
            <person name="Oggioni M."/>
        </authorList>
    </citation>
    <scope>NUCLEOTIDE SEQUENCE [LARGE SCALE GENOMIC DNA]</scope>
    <source>
        <strain>G54</strain>
    </source>
</reference>
<gene>
    <name evidence="1" type="primary">rnpA</name>
    <name type="ordered locus">SPG_1956</name>
</gene>
<feature type="chain" id="PRO_1000100397" description="Ribonuclease P protein component">
    <location>
        <begin position="1"/>
        <end position="123"/>
    </location>
</feature>
<organism>
    <name type="scientific">Streptococcus pneumoniae serotype 19F (strain G54)</name>
    <dbReference type="NCBI Taxonomy" id="512566"/>
    <lineage>
        <taxon>Bacteria</taxon>
        <taxon>Bacillati</taxon>
        <taxon>Bacillota</taxon>
        <taxon>Bacilli</taxon>
        <taxon>Lactobacillales</taxon>
        <taxon>Streptococcaceae</taxon>
        <taxon>Streptococcus</taxon>
    </lineage>
</organism>
<dbReference type="EC" id="3.1.26.5" evidence="1"/>
<dbReference type="EMBL" id="CP001015">
    <property type="protein sequence ID" value="ACF55368.1"/>
    <property type="molecule type" value="Genomic_DNA"/>
</dbReference>
<dbReference type="SMR" id="B5E2W2"/>
<dbReference type="KEGG" id="spx:SPG_1956"/>
<dbReference type="HOGENOM" id="CLU_117179_9_1_9"/>
<dbReference type="GO" id="GO:0030677">
    <property type="term" value="C:ribonuclease P complex"/>
    <property type="evidence" value="ECO:0007669"/>
    <property type="project" value="TreeGrafter"/>
</dbReference>
<dbReference type="GO" id="GO:0042781">
    <property type="term" value="F:3'-tRNA processing endoribonuclease activity"/>
    <property type="evidence" value="ECO:0007669"/>
    <property type="project" value="TreeGrafter"/>
</dbReference>
<dbReference type="GO" id="GO:0004526">
    <property type="term" value="F:ribonuclease P activity"/>
    <property type="evidence" value="ECO:0007669"/>
    <property type="project" value="UniProtKB-UniRule"/>
</dbReference>
<dbReference type="GO" id="GO:0000049">
    <property type="term" value="F:tRNA binding"/>
    <property type="evidence" value="ECO:0007669"/>
    <property type="project" value="UniProtKB-UniRule"/>
</dbReference>
<dbReference type="GO" id="GO:0001682">
    <property type="term" value="P:tRNA 5'-leader removal"/>
    <property type="evidence" value="ECO:0007669"/>
    <property type="project" value="UniProtKB-UniRule"/>
</dbReference>
<dbReference type="FunFam" id="3.30.230.10:FF:000021">
    <property type="entry name" value="Ribonuclease P protein component"/>
    <property type="match status" value="1"/>
</dbReference>
<dbReference type="Gene3D" id="3.30.230.10">
    <property type="match status" value="1"/>
</dbReference>
<dbReference type="HAMAP" id="MF_00227">
    <property type="entry name" value="RNase_P"/>
    <property type="match status" value="1"/>
</dbReference>
<dbReference type="InterPro" id="IPR020568">
    <property type="entry name" value="Ribosomal_Su5_D2-typ_SF"/>
</dbReference>
<dbReference type="InterPro" id="IPR014721">
    <property type="entry name" value="Ribsml_uS5_D2-typ_fold_subgr"/>
</dbReference>
<dbReference type="InterPro" id="IPR000100">
    <property type="entry name" value="RNase_P"/>
</dbReference>
<dbReference type="InterPro" id="IPR020539">
    <property type="entry name" value="RNase_P_CS"/>
</dbReference>
<dbReference type="NCBIfam" id="TIGR00188">
    <property type="entry name" value="rnpA"/>
    <property type="match status" value="1"/>
</dbReference>
<dbReference type="PANTHER" id="PTHR33992">
    <property type="entry name" value="RIBONUCLEASE P PROTEIN COMPONENT"/>
    <property type="match status" value="1"/>
</dbReference>
<dbReference type="PANTHER" id="PTHR33992:SF1">
    <property type="entry name" value="RIBONUCLEASE P PROTEIN COMPONENT"/>
    <property type="match status" value="1"/>
</dbReference>
<dbReference type="Pfam" id="PF00825">
    <property type="entry name" value="Ribonuclease_P"/>
    <property type="match status" value="1"/>
</dbReference>
<dbReference type="SUPFAM" id="SSF54211">
    <property type="entry name" value="Ribosomal protein S5 domain 2-like"/>
    <property type="match status" value="1"/>
</dbReference>
<dbReference type="PROSITE" id="PS00648">
    <property type="entry name" value="RIBONUCLEASE_P"/>
    <property type="match status" value="1"/>
</dbReference>
<sequence>MKKNFRVKREKDFKAIFKEGTSFANRKFVVYQLENQKNHFRVGLSVSKKLGNAVTRNQIKRRIRHIIQNAKGSLVEDVDFVVIARKGVETLGYAEMEKNLLHVLKLSKIYREGNGSEKETKVD</sequence>
<accession>B5E2W2</accession>